<comment type="function">
    <text evidence="1">Endonuclease that catalyzes the cleavage of RNA on the 3' side of pyrimidine nucleotides. Acts on single-stranded and double-stranded RNA (By similarity).</text>
</comment>
<comment type="catalytic activity">
    <reaction>
        <text>an [RNA] containing cytidine + H2O = an [RNA]-3'-cytidine-3'-phosphate + a 5'-hydroxy-ribonucleotide-3'-[RNA].</text>
        <dbReference type="EC" id="4.6.1.18"/>
    </reaction>
</comment>
<comment type="catalytic activity">
    <reaction>
        <text>an [RNA] containing uridine + H2O = an [RNA]-3'-uridine-3'-phosphate + a 5'-hydroxy-ribonucleotide-3'-[RNA].</text>
        <dbReference type="EC" id="4.6.1.18"/>
    </reaction>
</comment>
<comment type="subunit">
    <text evidence="1">Monomer.</text>
</comment>
<comment type="subcellular location">
    <subcellularLocation>
        <location evidence="1">Secreted</location>
    </subcellularLocation>
</comment>
<comment type="similarity">
    <text evidence="3">Belongs to the pancreatic ribonuclease family.</text>
</comment>
<feature type="signal peptide" evidence="1">
    <location>
        <begin position="1"/>
        <end position="25"/>
    </location>
</feature>
<feature type="chain" id="PRO_0000234939" description="Ribonuclease pancreatic gamma-type">
    <location>
        <begin position="26"/>
        <end position="152"/>
    </location>
</feature>
<feature type="region of interest" description="Disordered" evidence="2">
    <location>
        <begin position="26"/>
        <end position="48"/>
    </location>
</feature>
<feature type="compositionally biased region" description="Basic and acidic residues" evidence="2">
    <location>
        <begin position="27"/>
        <end position="43"/>
    </location>
</feature>
<feature type="active site" description="Proton acceptor" evidence="1">
    <location>
        <position position="40"/>
    </location>
</feature>
<feature type="active site" description="Proton donor" evidence="1">
    <location>
        <position position="147"/>
    </location>
</feature>
<feature type="binding site" evidence="1">
    <location>
        <position position="35"/>
    </location>
    <ligand>
        <name>substrate</name>
    </ligand>
</feature>
<feature type="binding site" evidence="1">
    <location>
        <position position="38"/>
    </location>
    <ligand>
        <name>substrate</name>
    </ligand>
</feature>
<feature type="binding site" evidence="1">
    <location>
        <begin position="69"/>
        <end position="73"/>
    </location>
    <ligand>
        <name>substrate</name>
    </ligand>
</feature>
<feature type="binding site" evidence="1">
    <location>
        <position position="94"/>
    </location>
    <ligand>
        <name>substrate</name>
    </ligand>
</feature>
<feature type="disulfide bond" evidence="1">
    <location>
        <begin position="54"/>
        <end position="112"/>
    </location>
</feature>
<feature type="disulfide bond" evidence="1">
    <location>
        <begin position="68"/>
        <end position="123"/>
    </location>
</feature>
<feature type="disulfide bond" evidence="1">
    <location>
        <begin position="86"/>
        <end position="138"/>
    </location>
</feature>
<feature type="disulfide bond" evidence="1">
    <location>
        <begin position="93"/>
        <end position="100"/>
    </location>
</feature>
<evidence type="ECO:0000250" key="1"/>
<evidence type="ECO:0000256" key="2">
    <source>
        <dbReference type="SAM" id="MobiDB-lite"/>
    </source>
</evidence>
<evidence type="ECO:0000305" key="3"/>
<name>RNS1G_RATFU</name>
<dbReference type="EC" id="4.6.1.18"/>
<dbReference type="EMBL" id="AJ315457">
    <property type="protein sequence ID" value="CAC86438.1"/>
    <property type="molecule type" value="Genomic_DNA"/>
</dbReference>
<dbReference type="SMR" id="Q8VD90"/>
<dbReference type="GO" id="GO:0005576">
    <property type="term" value="C:extracellular region"/>
    <property type="evidence" value="ECO:0007669"/>
    <property type="project" value="UniProtKB-SubCell"/>
</dbReference>
<dbReference type="GO" id="GO:0016829">
    <property type="term" value="F:lyase activity"/>
    <property type="evidence" value="ECO:0007669"/>
    <property type="project" value="UniProtKB-KW"/>
</dbReference>
<dbReference type="GO" id="GO:0003676">
    <property type="term" value="F:nucleic acid binding"/>
    <property type="evidence" value="ECO:0007669"/>
    <property type="project" value="InterPro"/>
</dbReference>
<dbReference type="GO" id="GO:0004522">
    <property type="term" value="F:ribonuclease A activity"/>
    <property type="evidence" value="ECO:0007669"/>
    <property type="project" value="UniProtKB-EC"/>
</dbReference>
<dbReference type="GO" id="GO:0050830">
    <property type="term" value="P:defense response to Gram-positive bacterium"/>
    <property type="evidence" value="ECO:0007669"/>
    <property type="project" value="TreeGrafter"/>
</dbReference>
<dbReference type="CDD" id="cd06265">
    <property type="entry name" value="RNase_A_canonical"/>
    <property type="match status" value="1"/>
</dbReference>
<dbReference type="FunFam" id="3.10.130.10:FF:000001">
    <property type="entry name" value="Ribonuclease pancreatic"/>
    <property type="match status" value="1"/>
</dbReference>
<dbReference type="Gene3D" id="3.10.130.10">
    <property type="entry name" value="Ribonuclease A-like domain"/>
    <property type="match status" value="1"/>
</dbReference>
<dbReference type="InterPro" id="IPR001427">
    <property type="entry name" value="RNaseA"/>
</dbReference>
<dbReference type="InterPro" id="IPR036816">
    <property type="entry name" value="RNaseA-like_dom_sf"/>
</dbReference>
<dbReference type="InterPro" id="IPR023411">
    <property type="entry name" value="RNaseA_AS"/>
</dbReference>
<dbReference type="InterPro" id="IPR023412">
    <property type="entry name" value="RNaseA_domain"/>
</dbReference>
<dbReference type="PANTHER" id="PTHR11437">
    <property type="entry name" value="RIBONUCLEASE"/>
    <property type="match status" value="1"/>
</dbReference>
<dbReference type="PANTHER" id="PTHR11437:SF24">
    <property type="entry name" value="RIBONUCLEASE PANCREATIC"/>
    <property type="match status" value="1"/>
</dbReference>
<dbReference type="Pfam" id="PF00074">
    <property type="entry name" value="RnaseA"/>
    <property type="match status" value="1"/>
</dbReference>
<dbReference type="PRINTS" id="PR00794">
    <property type="entry name" value="RIBONUCLEASE"/>
</dbReference>
<dbReference type="SMART" id="SM00092">
    <property type="entry name" value="RNAse_Pc"/>
    <property type="match status" value="1"/>
</dbReference>
<dbReference type="SUPFAM" id="SSF54076">
    <property type="entry name" value="RNase A-like"/>
    <property type="match status" value="1"/>
</dbReference>
<dbReference type="PROSITE" id="PS00127">
    <property type="entry name" value="RNASE_PANCREATIC"/>
    <property type="match status" value="1"/>
</dbReference>
<proteinExistence type="inferred from homology"/>
<sequence>MGLEKSFILFSLLVLVLGCVQPSLVGESKESPSEKFKRRHMDEEGPYQSSPTYCNQMMKDRGMTSGRCKPLNTFVHESWAKVKAICSQDKVTCKNGKSNCHKSISTLNITDCLLMGSSKYPKCDYSTTARQKHSIIACDGNPYVPVHYDATV</sequence>
<protein>
    <recommendedName>
        <fullName>Ribonuclease pancreatic gamma-type</fullName>
        <ecNumber>4.6.1.18</ecNumber>
    </recommendedName>
    <alternativeName>
        <fullName>RNase 1 gamma</fullName>
    </alternativeName>
</protein>
<reference key="1">
    <citation type="journal article" date="2002" name="J. Mol. Evol.">
        <title>Pancreatic-type ribonuclease 1 gene duplications in rat species.</title>
        <authorList>
            <person name="Dubois J.-Y.F."/>
            <person name="Jekel P.A."/>
            <person name="Mulder P.P.M.F.A."/>
            <person name="Bussink A.P."/>
            <person name="Catzeflis F.M."/>
            <person name="Carsana A."/>
            <person name="Beintema J.J."/>
        </authorList>
    </citation>
    <scope>NUCLEOTIDE SEQUENCE [GENOMIC DNA]</scope>
</reference>
<keyword id="KW-1015">Disulfide bond</keyword>
<keyword id="KW-0255">Endonuclease</keyword>
<keyword id="KW-0378">Hydrolase</keyword>
<keyword id="KW-0456">Lyase</keyword>
<keyword id="KW-0540">Nuclease</keyword>
<keyword id="KW-0964">Secreted</keyword>
<keyword id="KW-0732">Signal</keyword>
<organism>
    <name type="scientific">Rattus fuscipes</name>
    <name type="common">Bush rat</name>
    <dbReference type="NCBI Taxonomy" id="10119"/>
    <lineage>
        <taxon>Eukaryota</taxon>
        <taxon>Metazoa</taxon>
        <taxon>Chordata</taxon>
        <taxon>Craniata</taxon>
        <taxon>Vertebrata</taxon>
        <taxon>Euteleostomi</taxon>
        <taxon>Mammalia</taxon>
        <taxon>Eutheria</taxon>
        <taxon>Euarchontoglires</taxon>
        <taxon>Glires</taxon>
        <taxon>Rodentia</taxon>
        <taxon>Myomorpha</taxon>
        <taxon>Muroidea</taxon>
        <taxon>Muridae</taxon>
        <taxon>Murinae</taxon>
        <taxon>Rattus</taxon>
    </lineage>
</organism>
<accession>Q8VD90</accession>